<organism>
    <name type="scientific">Rickettsia africae (strain ESF-5)</name>
    <dbReference type="NCBI Taxonomy" id="347255"/>
    <lineage>
        <taxon>Bacteria</taxon>
        <taxon>Pseudomonadati</taxon>
        <taxon>Pseudomonadota</taxon>
        <taxon>Alphaproteobacteria</taxon>
        <taxon>Rickettsiales</taxon>
        <taxon>Rickettsiaceae</taxon>
        <taxon>Rickettsieae</taxon>
        <taxon>Rickettsia</taxon>
        <taxon>spotted fever group</taxon>
    </lineage>
</organism>
<feature type="chain" id="PRO_1000216278" description="Tyrosine--tRNA ligase">
    <location>
        <begin position="1"/>
        <end position="411"/>
    </location>
</feature>
<feature type="domain" description="S4 RNA-binding" evidence="1">
    <location>
        <begin position="345"/>
        <end position="411"/>
    </location>
</feature>
<feature type="short sequence motif" description="'HIGH' region">
    <location>
        <begin position="39"/>
        <end position="48"/>
    </location>
</feature>
<feature type="short sequence motif" description="'KMSKS' region">
    <location>
        <begin position="231"/>
        <end position="235"/>
    </location>
</feature>
<feature type="binding site" evidence="1">
    <location>
        <position position="34"/>
    </location>
    <ligand>
        <name>L-tyrosine</name>
        <dbReference type="ChEBI" id="CHEBI:58315"/>
    </ligand>
</feature>
<feature type="binding site" evidence="1">
    <location>
        <position position="171"/>
    </location>
    <ligand>
        <name>L-tyrosine</name>
        <dbReference type="ChEBI" id="CHEBI:58315"/>
    </ligand>
</feature>
<feature type="binding site" evidence="1">
    <location>
        <position position="175"/>
    </location>
    <ligand>
        <name>L-tyrosine</name>
        <dbReference type="ChEBI" id="CHEBI:58315"/>
    </ligand>
</feature>
<feature type="binding site" evidence="1">
    <location>
        <position position="234"/>
    </location>
    <ligand>
        <name>ATP</name>
        <dbReference type="ChEBI" id="CHEBI:30616"/>
    </ligand>
</feature>
<proteinExistence type="inferred from homology"/>
<reference key="1">
    <citation type="journal article" date="2009" name="BMC Genomics">
        <title>Analysis of the Rickettsia africae genome reveals that virulence acquisition in Rickettsia species may be explained by genome reduction.</title>
        <authorList>
            <person name="Fournier P.-E."/>
            <person name="El Karkouri K."/>
            <person name="Leroy Q."/>
            <person name="Robert C."/>
            <person name="Giumelli B."/>
            <person name="Renesto P."/>
            <person name="Socolovschi C."/>
            <person name="Parola P."/>
            <person name="Audic S."/>
            <person name="Raoult D."/>
        </authorList>
    </citation>
    <scope>NUCLEOTIDE SEQUENCE [LARGE SCALE GENOMIC DNA]</scope>
    <source>
        <strain>ESF-5</strain>
    </source>
</reference>
<comment type="function">
    <text evidence="1">Catalyzes the attachment of tyrosine to tRNA(Tyr) in a two-step reaction: tyrosine is first activated by ATP to form Tyr-AMP and then transferred to the acceptor end of tRNA(Tyr).</text>
</comment>
<comment type="catalytic activity">
    <reaction evidence="1">
        <text>tRNA(Tyr) + L-tyrosine + ATP = L-tyrosyl-tRNA(Tyr) + AMP + diphosphate + H(+)</text>
        <dbReference type="Rhea" id="RHEA:10220"/>
        <dbReference type="Rhea" id="RHEA-COMP:9706"/>
        <dbReference type="Rhea" id="RHEA-COMP:9707"/>
        <dbReference type="ChEBI" id="CHEBI:15378"/>
        <dbReference type="ChEBI" id="CHEBI:30616"/>
        <dbReference type="ChEBI" id="CHEBI:33019"/>
        <dbReference type="ChEBI" id="CHEBI:58315"/>
        <dbReference type="ChEBI" id="CHEBI:78442"/>
        <dbReference type="ChEBI" id="CHEBI:78536"/>
        <dbReference type="ChEBI" id="CHEBI:456215"/>
        <dbReference type="EC" id="6.1.1.1"/>
    </reaction>
</comment>
<comment type="subunit">
    <text evidence="1">Homodimer.</text>
</comment>
<comment type="subcellular location">
    <subcellularLocation>
        <location evidence="1">Cytoplasm</location>
    </subcellularLocation>
</comment>
<comment type="similarity">
    <text evidence="1">Belongs to the class-I aminoacyl-tRNA synthetase family. TyrS type 1 subfamily.</text>
</comment>
<sequence>MRFIEEFINKGYFHQCTDLDRLTAITKETKIAAYIGFDCTATSLHIGSLMQIMILRLLQQHGHKPIVIIGGGTSKIGDPTWKDEVRKIVSKEDIAKNAEGIKKSLSKFIKFGDGKSDAIMLDNAEWLDSFNYLDFLRDFGSYFSVNRMLTMDSVKLRLEREQHLSFLEFNYMLLQAYDFYYLSKHYNCSLQLGGSDQWGNIVMGADLIRKISGKEVFGMTTPLLTTSSGAKMGKTAAGAVWLNEDLLSPYDYYQYWRNCEDADIVRFAKLYSEFTQEELNRFESLAAEDINAAKKQLAYELTKLCHSEQAAKSALETAVKIFEEGQIDENLPTVVLEKEVLQAGISAYELFHEAGLVTSKSEARKLIRGNGAKINDRLVEDENMIINTNFLLDKKVIKLSAGKKRHILVRV</sequence>
<protein>
    <recommendedName>
        <fullName evidence="1">Tyrosine--tRNA ligase</fullName>
        <ecNumber evidence="1">6.1.1.1</ecNumber>
    </recommendedName>
    <alternativeName>
        <fullName evidence="1">Tyrosyl-tRNA synthetase</fullName>
        <shortName evidence="1">TyrRS</shortName>
    </alternativeName>
</protein>
<accession>C3PNX7</accession>
<gene>
    <name evidence="1" type="primary">tyrS</name>
    <name type="ordered locus">RAF_ORF0750</name>
</gene>
<keyword id="KW-0030">Aminoacyl-tRNA synthetase</keyword>
<keyword id="KW-0067">ATP-binding</keyword>
<keyword id="KW-0963">Cytoplasm</keyword>
<keyword id="KW-0436">Ligase</keyword>
<keyword id="KW-0547">Nucleotide-binding</keyword>
<keyword id="KW-0648">Protein biosynthesis</keyword>
<keyword id="KW-0694">RNA-binding</keyword>
<name>SYY_RICAE</name>
<dbReference type="EC" id="6.1.1.1" evidence="1"/>
<dbReference type="EMBL" id="CP001612">
    <property type="protein sequence ID" value="ACP53637.1"/>
    <property type="molecule type" value="Genomic_DNA"/>
</dbReference>
<dbReference type="RefSeq" id="WP_012719830.1">
    <property type="nucleotide sequence ID" value="NC_012633.1"/>
</dbReference>
<dbReference type="SMR" id="C3PNX7"/>
<dbReference type="KEGG" id="raf:RAF_ORF0750"/>
<dbReference type="HOGENOM" id="CLU_024003_0_3_5"/>
<dbReference type="Proteomes" id="UP000002305">
    <property type="component" value="Chromosome"/>
</dbReference>
<dbReference type="GO" id="GO:0005829">
    <property type="term" value="C:cytosol"/>
    <property type="evidence" value="ECO:0007669"/>
    <property type="project" value="TreeGrafter"/>
</dbReference>
<dbReference type="GO" id="GO:0005524">
    <property type="term" value="F:ATP binding"/>
    <property type="evidence" value="ECO:0007669"/>
    <property type="project" value="UniProtKB-UniRule"/>
</dbReference>
<dbReference type="GO" id="GO:0003723">
    <property type="term" value="F:RNA binding"/>
    <property type="evidence" value="ECO:0007669"/>
    <property type="project" value="UniProtKB-KW"/>
</dbReference>
<dbReference type="GO" id="GO:0004831">
    <property type="term" value="F:tyrosine-tRNA ligase activity"/>
    <property type="evidence" value="ECO:0007669"/>
    <property type="project" value="UniProtKB-UniRule"/>
</dbReference>
<dbReference type="GO" id="GO:0006437">
    <property type="term" value="P:tyrosyl-tRNA aminoacylation"/>
    <property type="evidence" value="ECO:0007669"/>
    <property type="project" value="UniProtKB-UniRule"/>
</dbReference>
<dbReference type="CDD" id="cd00165">
    <property type="entry name" value="S4"/>
    <property type="match status" value="1"/>
</dbReference>
<dbReference type="CDD" id="cd00805">
    <property type="entry name" value="TyrRS_core"/>
    <property type="match status" value="1"/>
</dbReference>
<dbReference type="FunFam" id="1.10.240.10:FF:000001">
    <property type="entry name" value="Tyrosine--tRNA ligase"/>
    <property type="match status" value="1"/>
</dbReference>
<dbReference type="Gene3D" id="3.40.50.620">
    <property type="entry name" value="HUPs"/>
    <property type="match status" value="1"/>
</dbReference>
<dbReference type="Gene3D" id="3.10.290.10">
    <property type="entry name" value="RNA-binding S4 domain"/>
    <property type="match status" value="1"/>
</dbReference>
<dbReference type="Gene3D" id="1.10.240.10">
    <property type="entry name" value="Tyrosyl-Transfer RNA Synthetase"/>
    <property type="match status" value="1"/>
</dbReference>
<dbReference type="HAMAP" id="MF_02006">
    <property type="entry name" value="Tyr_tRNA_synth_type1"/>
    <property type="match status" value="1"/>
</dbReference>
<dbReference type="InterPro" id="IPR002305">
    <property type="entry name" value="aa-tRNA-synth_Ic"/>
</dbReference>
<dbReference type="InterPro" id="IPR014729">
    <property type="entry name" value="Rossmann-like_a/b/a_fold"/>
</dbReference>
<dbReference type="InterPro" id="IPR036986">
    <property type="entry name" value="S4_RNA-bd_sf"/>
</dbReference>
<dbReference type="InterPro" id="IPR054608">
    <property type="entry name" value="SYY-like_C"/>
</dbReference>
<dbReference type="InterPro" id="IPR002307">
    <property type="entry name" value="Tyr-tRNA-ligase"/>
</dbReference>
<dbReference type="InterPro" id="IPR024088">
    <property type="entry name" value="Tyr-tRNA-ligase_bac-type"/>
</dbReference>
<dbReference type="InterPro" id="IPR024107">
    <property type="entry name" value="Tyr-tRNA-ligase_bac_1"/>
</dbReference>
<dbReference type="NCBIfam" id="TIGR00234">
    <property type="entry name" value="tyrS"/>
    <property type="match status" value="1"/>
</dbReference>
<dbReference type="PANTHER" id="PTHR11766:SF0">
    <property type="entry name" value="TYROSINE--TRNA LIGASE, MITOCHONDRIAL"/>
    <property type="match status" value="1"/>
</dbReference>
<dbReference type="PANTHER" id="PTHR11766">
    <property type="entry name" value="TYROSYL-TRNA SYNTHETASE"/>
    <property type="match status" value="1"/>
</dbReference>
<dbReference type="Pfam" id="PF22421">
    <property type="entry name" value="SYY_C-terminal"/>
    <property type="match status" value="1"/>
</dbReference>
<dbReference type="Pfam" id="PF00579">
    <property type="entry name" value="tRNA-synt_1b"/>
    <property type="match status" value="1"/>
</dbReference>
<dbReference type="PRINTS" id="PR01040">
    <property type="entry name" value="TRNASYNTHTYR"/>
</dbReference>
<dbReference type="SUPFAM" id="SSF55174">
    <property type="entry name" value="Alpha-L RNA-binding motif"/>
    <property type="match status" value="1"/>
</dbReference>
<dbReference type="SUPFAM" id="SSF52374">
    <property type="entry name" value="Nucleotidylyl transferase"/>
    <property type="match status" value="1"/>
</dbReference>
<dbReference type="PROSITE" id="PS50889">
    <property type="entry name" value="S4"/>
    <property type="match status" value="1"/>
</dbReference>
<evidence type="ECO:0000255" key="1">
    <source>
        <dbReference type="HAMAP-Rule" id="MF_02006"/>
    </source>
</evidence>